<feature type="chain" id="PRO_0000160612" description="Arsenical resistance operon repressor">
    <location>
        <begin position="1"/>
        <end position="117"/>
    </location>
</feature>
<feature type="domain" description="HTH arsR-type" evidence="1">
    <location>
        <begin position="1"/>
        <end position="92"/>
    </location>
</feature>
<feature type="DNA-binding region" description="H-T-H motif" evidence="1">
    <location>
        <begin position="33"/>
        <end position="52"/>
    </location>
</feature>
<geneLocation type="plasmid">
    <name>IncN R46</name>
</geneLocation>
<reference key="1">
    <citation type="journal article" date="1996" name="FEMS Microbiol. Lett.">
        <title>The arsenical resistance operon of IncN plasmid R46.</title>
        <authorList>
            <person name="Bruhn D.F."/>
            <person name="Li J."/>
            <person name="Silver S."/>
            <person name="Roberto F."/>
            <person name="Rosen B.P."/>
        </authorList>
    </citation>
    <scope>NUCLEOTIDE SEQUENCE [GENOMIC DNA]</scope>
</reference>
<proteinExistence type="predicted"/>
<protein>
    <recommendedName>
        <fullName>Arsenical resistance operon repressor</fullName>
    </recommendedName>
</protein>
<sequence length="117" mass="12999">MPEIASLQLFKILSDETRLGIVLLLREMGELCVCDLCTALEQSQPKTSRHLAMLRESGLLLDRKQGKWVHYRLSPHIPSWAALVIEQAWLSQQDDVQAIARKLASANCSGSGKAVCI</sequence>
<dbReference type="EMBL" id="U38947">
    <property type="protein sequence ID" value="AAB09624.1"/>
    <property type="molecule type" value="Genomic_DNA"/>
</dbReference>
<dbReference type="RefSeq" id="WP_001114073.1">
    <property type="nucleotide sequence ID" value="NZ_WTPU01000035.1"/>
</dbReference>
<dbReference type="SMR" id="P52144"/>
<dbReference type="GeneID" id="83701900"/>
<dbReference type="GO" id="GO:0003677">
    <property type="term" value="F:DNA binding"/>
    <property type="evidence" value="ECO:0007669"/>
    <property type="project" value="UniProtKB-KW"/>
</dbReference>
<dbReference type="GO" id="GO:0003700">
    <property type="term" value="F:DNA-binding transcription factor activity"/>
    <property type="evidence" value="ECO:0007669"/>
    <property type="project" value="InterPro"/>
</dbReference>
<dbReference type="GO" id="GO:0046685">
    <property type="term" value="P:response to arsenic-containing substance"/>
    <property type="evidence" value="ECO:0007669"/>
    <property type="project" value="UniProtKB-KW"/>
</dbReference>
<dbReference type="CDD" id="cd00090">
    <property type="entry name" value="HTH_ARSR"/>
    <property type="match status" value="1"/>
</dbReference>
<dbReference type="FunFam" id="1.10.10.10:FF:000279">
    <property type="entry name" value="Transcriptional regulator, ArsR family"/>
    <property type="match status" value="1"/>
</dbReference>
<dbReference type="Gene3D" id="1.10.10.10">
    <property type="entry name" value="Winged helix-like DNA-binding domain superfamily/Winged helix DNA-binding domain"/>
    <property type="match status" value="1"/>
</dbReference>
<dbReference type="InterPro" id="IPR011991">
    <property type="entry name" value="ArsR-like_HTH"/>
</dbReference>
<dbReference type="InterPro" id="IPR018334">
    <property type="entry name" value="ArsR_HTH"/>
</dbReference>
<dbReference type="InterPro" id="IPR001845">
    <property type="entry name" value="HTH_ArsR_DNA-bd_dom"/>
</dbReference>
<dbReference type="InterPro" id="IPR051081">
    <property type="entry name" value="HTH_MetalResp_TranReg"/>
</dbReference>
<dbReference type="InterPro" id="IPR036388">
    <property type="entry name" value="WH-like_DNA-bd_sf"/>
</dbReference>
<dbReference type="InterPro" id="IPR036390">
    <property type="entry name" value="WH_DNA-bd_sf"/>
</dbReference>
<dbReference type="NCBIfam" id="NF033788">
    <property type="entry name" value="HTH_metalloreg"/>
    <property type="match status" value="1"/>
</dbReference>
<dbReference type="NCBIfam" id="NF007528">
    <property type="entry name" value="PRK10141.1"/>
    <property type="match status" value="1"/>
</dbReference>
<dbReference type="PANTHER" id="PTHR33154:SF18">
    <property type="entry name" value="ARSENICAL RESISTANCE OPERON REPRESSOR"/>
    <property type="match status" value="1"/>
</dbReference>
<dbReference type="PANTHER" id="PTHR33154">
    <property type="entry name" value="TRANSCRIPTIONAL REGULATOR, ARSR FAMILY"/>
    <property type="match status" value="1"/>
</dbReference>
<dbReference type="Pfam" id="PF01022">
    <property type="entry name" value="HTH_5"/>
    <property type="match status" value="1"/>
</dbReference>
<dbReference type="PRINTS" id="PR00778">
    <property type="entry name" value="HTHARSR"/>
</dbReference>
<dbReference type="SMART" id="SM00418">
    <property type="entry name" value="HTH_ARSR"/>
    <property type="match status" value="1"/>
</dbReference>
<dbReference type="SUPFAM" id="SSF46785">
    <property type="entry name" value="Winged helix' DNA-binding domain"/>
    <property type="match status" value="1"/>
</dbReference>
<dbReference type="PROSITE" id="PS00846">
    <property type="entry name" value="HTH_ARSR_1"/>
    <property type="match status" value="1"/>
</dbReference>
<dbReference type="PROSITE" id="PS50987">
    <property type="entry name" value="HTH_ARSR_2"/>
    <property type="match status" value="1"/>
</dbReference>
<keyword id="KW-0059">Arsenical resistance</keyword>
<keyword id="KW-0238">DNA-binding</keyword>
<keyword id="KW-0614">Plasmid</keyword>
<keyword id="KW-0678">Repressor</keyword>
<keyword id="KW-0804">Transcription</keyword>
<keyword id="KW-0805">Transcription regulation</keyword>
<name>ARSR2_ECOLX</name>
<gene>
    <name type="primary">arsR</name>
</gene>
<accession>P52144</accession>
<comment type="function">
    <text>Transcriptional repressor for the ars operon. ArsR is a trans-acting regulatory protein which controls its own expression. The repressive effect of ArsR is alleviated by oxyions of +III oxidation state of arsenic, antimony, and bismuth, as well as arsenate (As(V)).</text>
</comment>
<comment type="subunit">
    <text>Binds DNA as a homodimer.</text>
</comment>
<organism>
    <name type="scientific">Escherichia coli</name>
    <dbReference type="NCBI Taxonomy" id="562"/>
    <lineage>
        <taxon>Bacteria</taxon>
        <taxon>Pseudomonadati</taxon>
        <taxon>Pseudomonadota</taxon>
        <taxon>Gammaproteobacteria</taxon>
        <taxon>Enterobacterales</taxon>
        <taxon>Enterobacteriaceae</taxon>
        <taxon>Escherichia</taxon>
    </lineage>
</organism>
<evidence type="ECO:0000255" key="1">
    <source>
        <dbReference type="PROSITE-ProRule" id="PRU00340"/>
    </source>
</evidence>